<evidence type="ECO:0000250" key="1"/>
<evidence type="ECO:0000250" key="2">
    <source>
        <dbReference type="UniProtKB" id="Q15910"/>
    </source>
</evidence>
<evidence type="ECO:0000250" key="3">
    <source>
        <dbReference type="UniProtKB" id="Q61188"/>
    </source>
</evidence>
<evidence type="ECO:0000255" key="4">
    <source>
        <dbReference type="PROSITE-ProRule" id="PRU00190"/>
    </source>
</evidence>
<evidence type="ECO:0000255" key="5">
    <source>
        <dbReference type="PROSITE-ProRule" id="PRU00970"/>
    </source>
</evidence>
<evidence type="ECO:0000256" key="6">
    <source>
        <dbReference type="SAM" id="MobiDB-lite"/>
    </source>
</evidence>
<evidence type="ECO:0000303" key="7">
    <source ref="1"/>
</evidence>
<evidence type="ECO:0000305" key="8"/>
<comment type="function">
    <text evidence="2 3">Polycomb group (PcG) protein. Catalytic subunit of the PRC2/EED-EZH2 complex, which methylates 'Lys-9' (H3K9me) and 'Lys-27' (H3K27me) of histone H3, leading to transcriptional repression of the affected target gene. Able to mono-, di- and trimethylate 'Lys-27' of histone H3 to form H3K27me1, H3K27me2 and H3K27me3, respectively. Displays a preference for substrates with less methylation, loses activity when progressively more methyl groups are incorporated into H3K27, H3K27me0 &gt; H3K27me1 &gt; H3K27me2. Compared to EZH1-containing complexes, it is more abundant in embryonic stem cells and plays a major role in forming H3K27me3, which is required for embryonic stem cell identity and proper differentiation. The PRC2/EED-EZH2 complex may also serve as a recruiting platform for DNA methyltransferases, thereby linking two epigenetic repression systems. EZH2 can also methylate non-histone proteins such as the transcription factor GATA4 and the nuclear receptor RORA. Regulates the circadian clock via histone methylation at the promoter of the circadian genes. Essential for the CRY1/2-mediated repression of the CLOCK-BMAL1 transcriptional activation of PER1/2. Involved in the di and trimethylation of 'Lys-27' of histone H3 on PER1/2 promoters which is necessary for the CRY1/2 proteins to inhibit transcription.</text>
</comment>
<comment type="catalytic activity">
    <reaction evidence="2">
        <text>L-lysyl(27)-[histone H3] + 3 S-adenosyl-L-methionine = N(6),N(6),N(6)-trimethyl-L-lysyl(27)-[histone H3] + 3 S-adenosyl-L-homocysteine + 3 H(+)</text>
        <dbReference type="Rhea" id="RHEA:60292"/>
        <dbReference type="Rhea" id="RHEA-COMP:15535"/>
        <dbReference type="Rhea" id="RHEA-COMP:15548"/>
        <dbReference type="ChEBI" id="CHEBI:15378"/>
        <dbReference type="ChEBI" id="CHEBI:29969"/>
        <dbReference type="ChEBI" id="CHEBI:57856"/>
        <dbReference type="ChEBI" id="CHEBI:59789"/>
        <dbReference type="ChEBI" id="CHEBI:61961"/>
        <dbReference type="EC" id="2.1.1.356"/>
    </reaction>
</comment>
<comment type="subunit">
    <text evidence="2 3">Component of the PRC2/EED-EZH2 complex, which includes EED, EZH2, SUZ12, RBBP4 and RBBP7 and possibly AEBP2 (By similarity). The minimum components required for methyltransferase activity of the PRC2/EED-EZH2 complex are EED, EZH2 and SUZ12 (By similarity). The PRC2 complex may also interact with DNMT1, DNMT3A, DNMT3B and PHF1 via the EZH2 subunit and with SIRT1 via the SUZ12 subunit (By similarity). Interacts with HDAC1 and HDAC2 (By similarity). Binds ATRX via the SET domain (Probable). Interacts with PRAME (By similarity). Interacts with CDYL. Interacts with BMAL1, CLOCK and CRY1 (By similarity). Interacts with DNMT3L; the interaction is direct (By similarity). Interacts with EZHIP; the interaction blocks EZH2 methyltransferase activity (By similarity). Interacts with ZNF263; recruited to the SIX3 promoter along with other proteins involved in chromatin modification and transcriptional corepression where it contributes to transcriptional repression (By similarity). Interacts with ARMC12 (By similarity). Interacts with ZMYND8; the interaction is dependent on the presence of chromatin (By similarity). Interacts with DDX18; this interaction inhibits the PRC2 complex (By similarity).</text>
</comment>
<comment type="subcellular location">
    <subcellularLocation>
        <location evidence="2">Nucleus</location>
    </subcellularLocation>
    <text evidence="3">Localizes to the inactive X chromosome in trophoblast stem cells.</text>
</comment>
<comment type="alternative products">
    <event type="alternative splicing"/>
    <isoform>
        <id>Q4R381-1</id>
        <name>1</name>
        <sequence type="displayed"/>
    </isoform>
    <isoform>
        <id>Q4R381-2</id>
        <name>2</name>
        <sequence type="described" ref="VSP_034951 VSP_034952"/>
    </isoform>
</comment>
<comment type="PTM">
    <text evidence="2">Phosphorylated by AKT1. Phosphorylation by AKT1 reduces methyltransferase activity. Phosphorylation at Thr-345 by CDK1 and CDK2 promotes maintenance of H3K27me3 levels at EZH2-target loci, thus leading to epigenetic gene silencing.</text>
</comment>
<comment type="PTM">
    <text evidence="2">Sumoylated.</text>
</comment>
<comment type="PTM">
    <text evidence="2">Glycosylated: O-GlcNAcylation at Ser-75 by OGT increases stability of EZH2 and facilitates the formation of H3K27me3 by the PRC2/EED-EZH2 complex.</text>
</comment>
<comment type="similarity">
    <text evidence="4">Belongs to the class V-like SAM-binding methyltransferase superfamily. Histone-lysine methyltransferase family. EZ subfamily.</text>
</comment>
<accession>Q4R381</accession>
<accession>Q4R780</accession>
<protein>
    <recommendedName>
        <fullName>Histone-lysine N-methyltransferase EZH2</fullName>
        <ecNumber evidence="2">2.1.1.356</ecNumber>
    </recommendedName>
    <alternativeName>
        <fullName>Enhancer of zeste homolog 2</fullName>
    </alternativeName>
</protein>
<keyword id="KW-0025">Alternative splicing</keyword>
<keyword id="KW-0090">Biological rhythms</keyword>
<keyword id="KW-0156">Chromatin regulator</keyword>
<keyword id="KW-0325">Glycoprotein</keyword>
<keyword id="KW-1017">Isopeptide bond</keyword>
<keyword id="KW-0489">Methyltransferase</keyword>
<keyword id="KW-0539">Nucleus</keyword>
<keyword id="KW-0597">Phosphoprotein</keyword>
<keyword id="KW-1185">Reference proteome</keyword>
<keyword id="KW-0678">Repressor</keyword>
<keyword id="KW-0949">S-adenosyl-L-methionine</keyword>
<keyword id="KW-0804">Transcription</keyword>
<keyword id="KW-0805">Transcription regulation</keyword>
<keyword id="KW-0808">Transferase</keyword>
<keyword id="KW-0832">Ubl conjugation</keyword>
<reference key="1">
    <citation type="submission" date="2005-06" db="EMBL/GenBank/DDBJ databases">
        <title>DNA sequences of macaque genes expressed in brain or testis and its evolutionary implications.</title>
        <authorList>
            <consortium name="International consortium for macaque cDNA sequencing and analysis"/>
        </authorList>
    </citation>
    <scope>NUCLEOTIDE SEQUENCE [LARGE SCALE MRNA] (ISOFORMS 1 AND 2)</scope>
    <source>
        <tissue>Testis</tissue>
    </source>
</reference>
<name>EZH2_MACFA</name>
<dbReference type="EC" id="2.1.1.356" evidence="2"/>
<dbReference type="EMBL" id="AB168941">
    <property type="protein sequence ID" value="BAE01042.1"/>
    <property type="molecule type" value="mRNA"/>
</dbReference>
<dbReference type="EMBL" id="AB179385">
    <property type="protein sequence ID" value="BAE02436.1"/>
    <property type="molecule type" value="mRNA"/>
</dbReference>
<dbReference type="RefSeq" id="XP_005551149.1">
    <property type="nucleotide sequence ID" value="XM_005551092.2"/>
</dbReference>
<dbReference type="SMR" id="Q4R381"/>
<dbReference type="STRING" id="9541.ENSMFAP00000043388"/>
<dbReference type="GlyCosmos" id="Q4R381">
    <property type="glycosylation" value="1 site, No reported glycans"/>
</dbReference>
<dbReference type="eggNOG" id="KOG1079">
    <property type="taxonomic scope" value="Eukaryota"/>
</dbReference>
<dbReference type="Proteomes" id="UP000233100">
    <property type="component" value="Unplaced"/>
</dbReference>
<dbReference type="GO" id="GO:0035098">
    <property type="term" value="C:ESC/E(Z) complex"/>
    <property type="evidence" value="ECO:0000250"/>
    <property type="project" value="UniProtKB"/>
</dbReference>
<dbReference type="GO" id="GO:0003682">
    <property type="term" value="F:chromatin binding"/>
    <property type="evidence" value="ECO:0000250"/>
    <property type="project" value="UniProtKB"/>
</dbReference>
<dbReference type="GO" id="GO:0046976">
    <property type="term" value="F:histone H3K27 methyltransferase activity"/>
    <property type="evidence" value="ECO:0000250"/>
    <property type="project" value="UniProtKB"/>
</dbReference>
<dbReference type="GO" id="GO:0140951">
    <property type="term" value="F:histone H3K27 trimethyltransferase activity"/>
    <property type="evidence" value="ECO:0007669"/>
    <property type="project" value="UniProtKB-EC"/>
</dbReference>
<dbReference type="GO" id="GO:1990841">
    <property type="term" value="F:promoter-specific chromatin binding"/>
    <property type="evidence" value="ECO:0000250"/>
    <property type="project" value="UniProtKB"/>
</dbReference>
<dbReference type="GO" id="GO:0031507">
    <property type="term" value="P:heterochromatin formation"/>
    <property type="evidence" value="ECO:0007669"/>
    <property type="project" value="TreeGrafter"/>
</dbReference>
<dbReference type="GO" id="GO:0032259">
    <property type="term" value="P:methylation"/>
    <property type="evidence" value="ECO:0007669"/>
    <property type="project" value="UniProtKB-KW"/>
</dbReference>
<dbReference type="GO" id="GO:0045892">
    <property type="term" value="P:negative regulation of DNA-templated transcription"/>
    <property type="evidence" value="ECO:0000250"/>
    <property type="project" value="UniProtKB"/>
</dbReference>
<dbReference type="GO" id="GO:0045814">
    <property type="term" value="P:negative regulation of gene expression, epigenetic"/>
    <property type="evidence" value="ECO:0000250"/>
    <property type="project" value="UniProtKB"/>
</dbReference>
<dbReference type="GO" id="GO:0048387">
    <property type="term" value="P:negative regulation of retinoic acid receptor signaling pathway"/>
    <property type="evidence" value="ECO:0000250"/>
    <property type="project" value="UniProtKB"/>
</dbReference>
<dbReference type="GO" id="GO:0000122">
    <property type="term" value="P:negative regulation of transcription by RNA polymerase II"/>
    <property type="evidence" value="ECO:0000250"/>
    <property type="project" value="UniProtKB"/>
</dbReference>
<dbReference type="GO" id="GO:0010718">
    <property type="term" value="P:positive regulation of epithelial to mesenchymal transition"/>
    <property type="evidence" value="ECO:0000250"/>
    <property type="project" value="UniProtKB"/>
</dbReference>
<dbReference type="GO" id="GO:0043547">
    <property type="term" value="P:positive regulation of GTPase activity"/>
    <property type="evidence" value="ECO:0000250"/>
    <property type="project" value="UniProtKB"/>
</dbReference>
<dbReference type="GO" id="GO:0043406">
    <property type="term" value="P:positive regulation of MAP kinase activity"/>
    <property type="evidence" value="ECO:0000250"/>
    <property type="project" value="UniProtKB"/>
</dbReference>
<dbReference type="GO" id="GO:0071902">
    <property type="term" value="P:positive regulation of protein serine/threonine kinase activity"/>
    <property type="evidence" value="ECO:0000250"/>
    <property type="project" value="UniProtKB"/>
</dbReference>
<dbReference type="GO" id="GO:0042752">
    <property type="term" value="P:regulation of circadian rhythm"/>
    <property type="evidence" value="ECO:0000250"/>
    <property type="project" value="UniProtKB"/>
</dbReference>
<dbReference type="GO" id="GO:0048511">
    <property type="term" value="P:rhythmic process"/>
    <property type="evidence" value="ECO:0007669"/>
    <property type="project" value="UniProtKB-KW"/>
</dbReference>
<dbReference type="CDD" id="cd00167">
    <property type="entry name" value="SANT"/>
    <property type="match status" value="1"/>
</dbReference>
<dbReference type="CDD" id="cd19218">
    <property type="entry name" value="SET_EZH2"/>
    <property type="match status" value="1"/>
</dbReference>
<dbReference type="FunFam" id="2.170.270.10:FF:000001">
    <property type="entry name" value="Putative histone-lysine N-methyltransferase EZH2"/>
    <property type="match status" value="1"/>
</dbReference>
<dbReference type="Gene3D" id="1.20.58.1880">
    <property type="match status" value="1"/>
</dbReference>
<dbReference type="Gene3D" id="2.170.270.10">
    <property type="entry name" value="SET domain"/>
    <property type="match status" value="1"/>
</dbReference>
<dbReference type="InterPro" id="IPR026489">
    <property type="entry name" value="CXC_dom"/>
</dbReference>
<dbReference type="InterPro" id="IPR045318">
    <property type="entry name" value="EZH1/2-like"/>
</dbReference>
<dbReference type="InterPro" id="IPR048358">
    <property type="entry name" value="EZH1/2_MCSS"/>
</dbReference>
<dbReference type="InterPro" id="IPR021654">
    <property type="entry name" value="EZH1/EZH2"/>
</dbReference>
<dbReference type="InterPro" id="IPR044439">
    <property type="entry name" value="EZH2_SET"/>
</dbReference>
<dbReference type="InterPro" id="IPR041343">
    <property type="entry name" value="PRC2_HTH_1"/>
</dbReference>
<dbReference type="InterPro" id="IPR041355">
    <property type="entry name" value="Pre-SET_CXC"/>
</dbReference>
<dbReference type="InterPro" id="IPR001005">
    <property type="entry name" value="SANT/Myb"/>
</dbReference>
<dbReference type="InterPro" id="IPR001214">
    <property type="entry name" value="SET_dom"/>
</dbReference>
<dbReference type="InterPro" id="IPR046341">
    <property type="entry name" value="SET_dom_sf"/>
</dbReference>
<dbReference type="InterPro" id="IPR033467">
    <property type="entry name" value="Tesmin/TSO1-like_CXC"/>
</dbReference>
<dbReference type="PANTHER" id="PTHR45747">
    <property type="entry name" value="HISTONE-LYSINE N-METHYLTRANSFERASE E(Z)"/>
    <property type="match status" value="1"/>
</dbReference>
<dbReference type="PANTHER" id="PTHR45747:SF3">
    <property type="entry name" value="HISTONE-LYSINE N-METHYLTRANSFERASE EZH2"/>
    <property type="match status" value="1"/>
</dbReference>
<dbReference type="Pfam" id="PF21358">
    <property type="entry name" value="Ezh2_MCSS"/>
    <property type="match status" value="1"/>
</dbReference>
<dbReference type="Pfam" id="PF11616">
    <property type="entry name" value="EZH2_WD-Binding"/>
    <property type="match status" value="1"/>
</dbReference>
<dbReference type="Pfam" id="PF18118">
    <property type="entry name" value="PRC2_HTH_1"/>
    <property type="match status" value="1"/>
</dbReference>
<dbReference type="Pfam" id="PF18264">
    <property type="entry name" value="preSET_CXC"/>
    <property type="match status" value="1"/>
</dbReference>
<dbReference type="Pfam" id="PF00856">
    <property type="entry name" value="SET"/>
    <property type="match status" value="1"/>
</dbReference>
<dbReference type="SMART" id="SM01114">
    <property type="entry name" value="CXC"/>
    <property type="match status" value="1"/>
</dbReference>
<dbReference type="SMART" id="SM00717">
    <property type="entry name" value="SANT"/>
    <property type="match status" value="2"/>
</dbReference>
<dbReference type="SMART" id="SM00317">
    <property type="entry name" value="SET"/>
    <property type="match status" value="1"/>
</dbReference>
<dbReference type="SUPFAM" id="SSF82199">
    <property type="entry name" value="SET domain"/>
    <property type="match status" value="1"/>
</dbReference>
<dbReference type="PROSITE" id="PS51633">
    <property type="entry name" value="CXC"/>
    <property type="match status" value="1"/>
</dbReference>
<dbReference type="PROSITE" id="PS50280">
    <property type="entry name" value="SET"/>
    <property type="match status" value="1"/>
</dbReference>
<proteinExistence type="evidence at transcript level"/>
<gene>
    <name type="primary">EZH2</name>
    <name type="ORF">QtsA-15957</name>
    <name type="ORF">QtsA-18821</name>
</gene>
<sequence length="746" mass="85333">MGQTGKKSEKGPVCWRKRVKSEYMRLRQLKRFRRADEVKSMFSSNRQKILERTEILNQEWKQRRIQPVHILTSVSSLRGTRECSVTSDLDFPTQVIPLKTLNAVASVPIMYSWSPLQQNFMVEDETVLHNIPYMGDEVLDQDGTFIEELIKNYDGKVHGDRECGFINDEIFVELVNALGQYNDDDDDDDGDDPEEREEKQKDLEDHRDDKESRPPRKFPSDKIFEAISSMFPDKGTAEELKEKYKELTEQQLPGALPPECTPNIDGPNAKSVQREQSLHSFHTLFCRRCFKYDCFLHPFHATPNAYKRKNTETALDNKPCGPQCYQHLEGAKEFAAALTAERIKTPPKRPGGRRRGRLPNNSSRPSTPTINVLESKDTDSDREAGTETGGENNDKEEEEKKDETSSSSEANSRCQTPIKMKPNIEPPENVEWSGAEASMFRVLIGTYYDNFCAIARLIGTKTCRQVYEFRVKESSIIAPAPAEDVDTPPRKKKRKHRLWAAHCRKIQLKKDGSSNHVYNYQPCDHPRQPCDSSCPCVIAQNFCEKFCQCSSECQNRFPGCRCKAQCNTKQCPCYLAVRECDPDLCLTCGAADHWDSKNVSCKNCSIQRGSKKHLLLAPSDVAGWGIFIKDPVQKNEFISEYCGEIISQDEADRRGKVYDKYMCSFLFNLNNDFVVDATRKGNKIRFANHSVNPNCYAKVMMVNGDHRIGIFAKRAIQTGEELFFDYRYSQADALKYVGIEREMEIP</sequence>
<feature type="chain" id="PRO_0000345426" description="Histone-lysine N-methyltransferase EZH2">
    <location>
        <begin position="1"/>
        <end position="746"/>
    </location>
</feature>
<feature type="domain" description="CXC" evidence="5">
    <location>
        <begin position="503"/>
        <end position="605"/>
    </location>
</feature>
<feature type="domain" description="SET" evidence="4">
    <location>
        <begin position="612"/>
        <end position="727"/>
    </location>
</feature>
<feature type="region of interest" description="Interaction with DNMT1, DNMT3A and DNMT3B" evidence="1">
    <location>
        <begin position="1"/>
        <end position="340"/>
    </location>
</feature>
<feature type="region of interest" description="Interaction with EED" evidence="1">
    <location>
        <begin position="39"/>
        <end position="68"/>
    </location>
</feature>
<feature type="region of interest" description="Disordered" evidence="6">
    <location>
        <begin position="180"/>
        <end position="222"/>
    </location>
</feature>
<feature type="region of interest" description="Interaction with CDYL" evidence="1">
    <location>
        <begin position="329"/>
        <end position="522"/>
    </location>
</feature>
<feature type="region of interest" description="Disordered" evidence="6">
    <location>
        <begin position="340"/>
        <end position="426"/>
    </location>
</feature>
<feature type="compositionally biased region" description="Acidic residues" evidence="6">
    <location>
        <begin position="182"/>
        <end position="195"/>
    </location>
</feature>
<feature type="compositionally biased region" description="Basic and acidic residues" evidence="6">
    <location>
        <begin position="196"/>
        <end position="222"/>
    </location>
</feature>
<feature type="compositionally biased region" description="Basic residues" evidence="6">
    <location>
        <begin position="345"/>
        <end position="357"/>
    </location>
</feature>
<feature type="compositionally biased region" description="Basic and acidic residues" evidence="6">
    <location>
        <begin position="374"/>
        <end position="385"/>
    </location>
</feature>
<feature type="modified residue" description="Phosphoserine; by PKB/AKT1" evidence="2">
    <location>
        <position position="21"/>
    </location>
</feature>
<feature type="modified residue" description="Phosphoserine" evidence="2">
    <location>
        <position position="76"/>
    </location>
</feature>
<feature type="modified residue" description="Phosphothreonine" evidence="2">
    <location>
        <position position="339"/>
    </location>
</feature>
<feature type="modified residue" description="Phosphothreonine; by CDK1 and CDK2" evidence="2">
    <location>
        <position position="345"/>
    </location>
</feature>
<feature type="modified residue" description="Phosphoserine" evidence="2">
    <location>
        <position position="363"/>
    </location>
</feature>
<feature type="modified residue" description="Phosphoserine" evidence="2">
    <location>
        <position position="366"/>
    </location>
</feature>
<feature type="modified residue" description="Phosphothreonine" evidence="2">
    <location>
        <position position="367"/>
    </location>
</feature>
<feature type="modified residue" description="Phosphothreonine" evidence="2">
    <location>
        <position position="487"/>
    </location>
</feature>
<feature type="glycosylation site" description="O-linked (GlcNAc) serine" evidence="1">
    <location>
        <position position="75"/>
    </location>
</feature>
<feature type="cross-link" description="Glycyl lysine isopeptide (Lys-Gly) (interchain with G-Cter in SUMO2)" evidence="2">
    <location>
        <position position="634"/>
    </location>
</feature>
<feature type="splice variant" id="VSP_034951" description="In isoform 2." evidence="7">
    <location>
        <begin position="74"/>
        <end position="82"/>
    </location>
</feature>
<feature type="splice variant" id="VSP_034952" description="In isoform 2." evidence="7">
    <original>DGSSNHVYNYQPCDHPRQPCDSSCPCVIAQNFCEKFCQCSSEC</original>
    <variation>G</variation>
    <location>
        <begin position="511"/>
        <end position="553"/>
    </location>
</feature>
<feature type="sequence conflict" description="In Ref. 1; BAE01042." evidence="8" ref="1">
    <original>A</original>
    <variation>T</variation>
    <location>
        <position position="305"/>
    </location>
</feature>
<organism>
    <name type="scientific">Macaca fascicularis</name>
    <name type="common">Crab-eating macaque</name>
    <name type="synonym">Cynomolgus monkey</name>
    <dbReference type="NCBI Taxonomy" id="9541"/>
    <lineage>
        <taxon>Eukaryota</taxon>
        <taxon>Metazoa</taxon>
        <taxon>Chordata</taxon>
        <taxon>Craniata</taxon>
        <taxon>Vertebrata</taxon>
        <taxon>Euteleostomi</taxon>
        <taxon>Mammalia</taxon>
        <taxon>Eutheria</taxon>
        <taxon>Euarchontoglires</taxon>
        <taxon>Primates</taxon>
        <taxon>Haplorrhini</taxon>
        <taxon>Catarrhini</taxon>
        <taxon>Cercopithecidae</taxon>
        <taxon>Cercopithecinae</taxon>
        <taxon>Macaca</taxon>
    </lineage>
</organism>